<evidence type="ECO:0000269" key="1">
    <source>
    </source>
</evidence>
<evidence type="ECO:0000269" key="2">
    <source>
    </source>
</evidence>
<evidence type="ECO:0000303" key="3">
    <source>
    </source>
</evidence>
<evidence type="ECO:0000305" key="4"/>
<evidence type="ECO:0000305" key="5">
    <source>
    </source>
</evidence>
<evidence type="ECO:0007744" key="6">
    <source>
        <dbReference type="PDB" id="6YWS"/>
    </source>
</evidence>
<evidence type="ECO:0007744" key="7">
    <source>
        <dbReference type="PDB" id="6YWV"/>
    </source>
</evidence>
<dbReference type="EMBL" id="CM002236">
    <property type="protein sequence ID" value="EAA34628.3"/>
    <property type="molecule type" value="Genomic_DNA"/>
</dbReference>
<dbReference type="RefSeq" id="XP_963864.3">
    <property type="nucleotide sequence ID" value="XM_958771.3"/>
</dbReference>
<dbReference type="PDB" id="6YWS">
    <property type="method" value="EM"/>
    <property type="resolution" value="2.74 A"/>
    <property type="chains" value="i=1-218"/>
</dbReference>
<dbReference type="PDB" id="6YWV">
    <property type="method" value="EM"/>
    <property type="resolution" value="3.03 A"/>
    <property type="chains" value="i=1-218"/>
</dbReference>
<dbReference type="PDB" id="6YWX">
    <property type="method" value="EM"/>
    <property type="resolution" value="3.10 A"/>
    <property type="chains" value="i=1-218"/>
</dbReference>
<dbReference type="PDBsum" id="6YWS"/>
<dbReference type="PDBsum" id="6YWV"/>
<dbReference type="PDBsum" id="6YWX"/>
<dbReference type="EMDB" id="EMD-10973"/>
<dbReference type="EMDB" id="EMD-10977"/>
<dbReference type="EMDB" id="EMD-10978"/>
<dbReference type="SMR" id="Q7SCZ3"/>
<dbReference type="STRING" id="367110.Q7SCZ3"/>
<dbReference type="PaxDb" id="5141-EFNCRP00000002881"/>
<dbReference type="EnsemblFungi" id="EAA34628">
    <property type="protein sequence ID" value="EAA34628"/>
    <property type="gene ID" value="NCU03094"/>
</dbReference>
<dbReference type="GeneID" id="3880013"/>
<dbReference type="KEGG" id="ncr:NCU03094"/>
<dbReference type="VEuPathDB" id="FungiDB:NCU03094"/>
<dbReference type="HOGENOM" id="CLU_086132_1_1_1"/>
<dbReference type="InParanoid" id="Q7SCZ3"/>
<dbReference type="OrthoDB" id="10252718at2759"/>
<dbReference type="Proteomes" id="UP000001805">
    <property type="component" value="Chromosome 1, Linkage Group I"/>
</dbReference>
<dbReference type="GO" id="GO:0005762">
    <property type="term" value="C:mitochondrial large ribosomal subunit"/>
    <property type="evidence" value="ECO:0000318"/>
    <property type="project" value="GO_Central"/>
</dbReference>
<dbReference type="GO" id="GO:0003735">
    <property type="term" value="F:structural constituent of ribosome"/>
    <property type="evidence" value="ECO:0000318"/>
    <property type="project" value="GO_Central"/>
</dbReference>
<dbReference type="InterPro" id="IPR013870">
    <property type="entry name" value="Ribosomal_mL54"/>
</dbReference>
<dbReference type="PANTHER" id="PTHR28595">
    <property type="entry name" value="39S RIBOSOMAL PROTEIN L54, MITOCHONDRIAL"/>
    <property type="match status" value="1"/>
</dbReference>
<dbReference type="PANTHER" id="PTHR28595:SF1">
    <property type="entry name" value="LARGE RIBOSOMAL SUBUNIT PROTEIN ML54"/>
    <property type="match status" value="1"/>
</dbReference>
<dbReference type="Pfam" id="PF08561">
    <property type="entry name" value="Ribosomal_L37"/>
    <property type="match status" value="1"/>
</dbReference>
<accession>Q7SCZ3</accession>
<keyword id="KW-0002">3D-structure</keyword>
<keyword id="KW-0496">Mitochondrion</keyword>
<keyword id="KW-1185">Reference proteome</keyword>
<keyword id="KW-0687">Ribonucleoprotein</keyword>
<keyword id="KW-0689">Ribosomal protein</keyword>
<keyword id="KW-0809">Transit peptide</keyword>
<organism>
    <name type="scientific">Neurospora crassa (strain ATCC 24698 / 74-OR23-1A / CBS 708.71 / DSM 1257 / FGSC 987)</name>
    <dbReference type="NCBI Taxonomy" id="367110"/>
    <lineage>
        <taxon>Eukaryota</taxon>
        <taxon>Fungi</taxon>
        <taxon>Dikarya</taxon>
        <taxon>Ascomycota</taxon>
        <taxon>Pezizomycotina</taxon>
        <taxon>Sordariomycetes</taxon>
        <taxon>Sordariomycetidae</taxon>
        <taxon>Sordariales</taxon>
        <taxon>Sordariaceae</taxon>
        <taxon>Neurospora</taxon>
    </lineage>
</organism>
<reference key="1">
    <citation type="journal article" date="2003" name="Nature">
        <title>The genome sequence of the filamentous fungus Neurospora crassa.</title>
        <authorList>
            <person name="Galagan J.E."/>
            <person name="Calvo S.E."/>
            <person name="Borkovich K.A."/>
            <person name="Selker E.U."/>
            <person name="Read N.D."/>
            <person name="Jaffe D.B."/>
            <person name="FitzHugh W."/>
            <person name="Ma L.-J."/>
            <person name="Smirnov S."/>
            <person name="Purcell S."/>
            <person name="Rehman B."/>
            <person name="Elkins T."/>
            <person name="Engels R."/>
            <person name="Wang S."/>
            <person name="Nielsen C.B."/>
            <person name="Butler J."/>
            <person name="Endrizzi M."/>
            <person name="Qui D."/>
            <person name="Ianakiev P."/>
            <person name="Bell-Pedersen D."/>
            <person name="Nelson M.A."/>
            <person name="Werner-Washburne M."/>
            <person name="Selitrennikoff C.P."/>
            <person name="Kinsey J.A."/>
            <person name="Braun E.L."/>
            <person name="Zelter A."/>
            <person name="Schulte U."/>
            <person name="Kothe G.O."/>
            <person name="Jedd G."/>
            <person name="Mewes H.-W."/>
            <person name="Staben C."/>
            <person name="Marcotte E."/>
            <person name="Greenberg D."/>
            <person name="Roy A."/>
            <person name="Foley K."/>
            <person name="Naylor J."/>
            <person name="Stange-Thomann N."/>
            <person name="Barrett R."/>
            <person name="Gnerre S."/>
            <person name="Kamal M."/>
            <person name="Kamvysselis M."/>
            <person name="Mauceli E.W."/>
            <person name="Bielke C."/>
            <person name="Rudd S."/>
            <person name="Frishman D."/>
            <person name="Krystofova S."/>
            <person name="Rasmussen C."/>
            <person name="Metzenberg R.L."/>
            <person name="Perkins D.D."/>
            <person name="Kroken S."/>
            <person name="Cogoni C."/>
            <person name="Macino G."/>
            <person name="Catcheside D.E.A."/>
            <person name="Li W."/>
            <person name="Pratt R.J."/>
            <person name="Osmani S.A."/>
            <person name="DeSouza C.P.C."/>
            <person name="Glass N.L."/>
            <person name="Orbach M.J."/>
            <person name="Berglund J.A."/>
            <person name="Voelker R."/>
            <person name="Yarden O."/>
            <person name="Plamann M."/>
            <person name="Seiler S."/>
            <person name="Dunlap J.C."/>
            <person name="Radford A."/>
            <person name="Aramayo R."/>
            <person name="Natvig D.O."/>
            <person name="Alex L.A."/>
            <person name="Mannhaupt G."/>
            <person name="Ebbole D.J."/>
            <person name="Freitag M."/>
            <person name="Paulsen I."/>
            <person name="Sachs M.S."/>
            <person name="Lander E.S."/>
            <person name="Nusbaum C."/>
            <person name="Birren B.W."/>
        </authorList>
    </citation>
    <scope>NUCLEOTIDE SEQUENCE [LARGE SCALE GENOMIC DNA]</scope>
    <source>
        <strain>ATCC 24698 / 74-OR23-1A / CBS 708.71 / DSM 1257 / FGSC 987</strain>
    </source>
</reference>
<reference key="2">
    <citation type="journal article" date="2006" name="FEMS Microbiol. Lett.">
        <title>Identification and comparative analysis of the large subunit mitochondrial ribosomal proteins of Neurospora crassa.</title>
        <authorList>
            <person name="Gan X."/>
            <person name="Arita K."/>
            <person name="Isono S."/>
            <person name="Kitakawa M."/>
            <person name="Yoshino K."/>
            <person name="Yonezawa K."/>
            <person name="Kato A."/>
            <person name="Inoue H."/>
            <person name="Isono K."/>
        </authorList>
    </citation>
    <scope>IDENTIFICATION IN THE MITOCHONDRIAL RIBOSOMAL LARGE COMPLEX</scope>
    <scope>IDENTIFICATION BY MASS SPECTROMETRY</scope>
</reference>
<reference evidence="6 7" key="3">
    <citation type="journal article" date="2020" name="Nat. Commun.">
        <title>Analysis of translating mitoribosome reveals functional characteristics of translation in mitochondria of fungi.</title>
        <authorList>
            <person name="Itoh Y."/>
            <person name="Naschberger A."/>
            <person name="Mortezaei N."/>
            <person name="Herrmann J.M."/>
            <person name="Amunts A."/>
        </authorList>
    </citation>
    <scope>STRUCTURE BY ELECTRON MICROSCOPY (2.74 ANGSTROMS)</scope>
</reference>
<gene>
    <name type="primary">mrpl37</name>
    <name type="ORF">NCU03094</name>
</gene>
<sequence length="218" mass="23145">MICRTCLRRASGFARPAAAAATRPMVAASSRAAFSTTFSVCTPPAATPAAAAPATSTAEAGLAPVPGAATTEQAKAAISSCPAGTKLNGLNYFKNKADPVALPDEEYPEWLWRCLEVQKKTDDAADADAGDEFSKSKKQRRLAMKRARAQEAKILASGDLEALAPKIPLQKQSVNLPGAVNGGVQDAVLADEKREELRKAMRKERKAKIKESNYLKAM</sequence>
<comment type="function">
    <text evidence="5">Component of the mitochondrial ribosome (mitoribosome), a dedicated translation machinery responsible for the synthesis of mitochondrial genome-encoded proteins, including at least some of the essential transmembrane subunits of the mitochondrial respiratory chain. The mitoribosomes are attached to the mitochondrial inner membrane and translation products are cotranslationally integrated into the membrane.</text>
</comment>
<comment type="subunit">
    <text evidence="1 2">Component of the mitochondrial large ribosomal subunit (mt-LSU). Mature N.crassa 74S mitochondrial ribosomes consist of a small (37S) and a large (54S) subunit. The 37S small subunit contains a 16S ribosomal RNA (16S mt-rRNA) and 32 different proteins. The 54S large subunit contains a 23S rRNA (23S mt-rRNA) and 42 different proteins.</text>
</comment>
<comment type="subcellular location">
    <subcellularLocation>
        <location evidence="1 2">Mitochondrion</location>
    </subcellularLocation>
</comment>
<comment type="similarity">
    <text evidence="4">Belongs to the mitochondrion-specific ribosomal protein mL54 family.</text>
</comment>
<feature type="chain" id="PRO_0000458589" description="Large ribosomal subunit protein mL54">
    <location>
        <begin position="1"/>
        <end position="218"/>
    </location>
</feature>
<protein>
    <recommendedName>
        <fullName evidence="3">Large ribosomal subunit protein mL54</fullName>
    </recommendedName>
</protein>
<proteinExistence type="evidence at protein level"/>
<name>RM37_NEUCR</name>